<keyword id="KW-0002">3D-structure</keyword>
<keyword id="KW-1015">Disulfide bond</keyword>
<keyword id="KW-0325">Glycoprotein</keyword>
<keyword id="KW-0393">Immunoglobulin domain</keyword>
<keyword id="KW-0472">Membrane</keyword>
<keyword id="KW-1185">Reference proteome</keyword>
<keyword id="KW-0732">Signal</keyword>
<keyword id="KW-0812">Transmembrane</keyword>
<keyword id="KW-1133">Transmembrane helix</keyword>
<protein>
    <recommendedName>
        <fullName>CD276 antigen</fullName>
    </recommendedName>
    <alternativeName>
        <fullName>B7 homolog 3</fullName>
        <shortName>B7-H3</shortName>
    </alternativeName>
    <alternativeName>
        <fullName>Costimulatory molecule</fullName>
    </alternativeName>
    <cdAntigenName>CD276</cdAntigenName>
</protein>
<comment type="function">
    <text evidence="5 6 7 8 9">Modulates T-cell-mediated immune responses and the development of acute and chronic transplant rejection. Plays a positive regulatory role in bone formation and has a dual role in the bone-immune interface. Induces antitumor immunity as it activates both acquired and innate immunity leading to natural killer cell and CD8 T-cell dependent killing of tumor cells.</text>
</comment>
<comment type="subunit">
    <text evidence="1">Interacts with TREML2 and this interaction enhances T-cell activation.</text>
</comment>
<comment type="interaction">
    <interactant intactId="EBI-16044767">
        <id>Q8VE98</id>
    </interactant>
    <interactant intactId="EBI-16044767">
        <id>Q8VE98</id>
        <label>Cd276</label>
    </interactant>
    <organismsDiffer>false</organismsDiffer>
    <experiments>2</experiments>
</comment>
<comment type="subcellular location">
    <subcellularLocation>
        <location evidence="12">Membrane</location>
        <topology evidence="12">Single-pass type I membrane protein</topology>
    </subcellularLocation>
</comment>
<comment type="tissue specificity">
    <text evidence="5">Ubiquitous.</text>
</comment>
<comment type="developmental stage">
    <text evidence="6">Highly expressed in developing bones during embryogenesis and expression increases as osteoblast precursor cells differentiate into mature osteoblasts.</text>
</comment>
<comment type="induction">
    <text evidence="9">Up-regulated in cells mediating rejection of mouse transplant.</text>
</comment>
<comment type="disruption phenotype">
    <text evidence="6">Mice display a lower bone mineral density in cortical bones with femurs more susceptible to bone fracture, but do not exhibit any important skeletal abnormalities. Calvarial cells reveal normal number of osteoblast precursor cells with adequate proliferative capacity, but have impaired osteogenic differentiation. Furthermore, following cardiac transplantation, they display permanent survival under rapamycin regimen and cardiac transplants also show markedly decreased production of key cytokine and chemokine. The incidence of chronic transplant rejection is also inhibited. Mice also develop more severe airway inflammation and experimental autoimmune encephalomyelitis earlier than wild-type littermates as well as accumulate higher concentrations of autoantibodies to DNA.</text>
</comment>
<comment type="miscellaneous">
    <text>Gene transfer of B7-H3 leads to complete regression of 50 per cent tumors, or significantly slows tumor growth.</text>
</comment>
<comment type="miscellaneous">
    <text>In primates, B7-H3 locus underwent genomic duplication leading to tandemly repeated immunoglobulin-like V and C domains (VC domains). The dominantly expressed human B7-H3 isoform contains tandemly duplicated VC domains. In contrast, mouse B7-H3 transcript contains only one single VC domain form due to an exon structure corresponding to V domain-(pseudoexon C)-(pseudoexon V)-C domain. This duplication appearing in primates is suggested to be very recent supporting a model of multiple independent emergence of tandem VC repeats within human and monkey species.</text>
</comment>
<comment type="similarity">
    <text evidence="12">Belongs to the immunoglobulin superfamily. BTN/MOG family.</text>
</comment>
<organism>
    <name type="scientific">Mus musculus</name>
    <name type="common">Mouse</name>
    <dbReference type="NCBI Taxonomy" id="10090"/>
    <lineage>
        <taxon>Eukaryota</taxon>
        <taxon>Metazoa</taxon>
        <taxon>Chordata</taxon>
        <taxon>Craniata</taxon>
        <taxon>Vertebrata</taxon>
        <taxon>Euteleostomi</taxon>
        <taxon>Mammalia</taxon>
        <taxon>Eutheria</taxon>
        <taxon>Euarchontoglires</taxon>
        <taxon>Glires</taxon>
        <taxon>Rodentia</taxon>
        <taxon>Myomorpha</taxon>
        <taxon>Muroidea</taxon>
        <taxon>Muridae</taxon>
        <taxon>Murinae</taxon>
        <taxon>Mus</taxon>
        <taxon>Mus</taxon>
    </lineage>
</organism>
<accession>Q8VE98</accession>
<dbReference type="EMBL" id="AY190318">
    <property type="protein sequence ID" value="AAP04007.1"/>
    <property type="molecule type" value="mRNA"/>
</dbReference>
<dbReference type="EMBL" id="AK155114">
    <property type="protein sequence ID" value="BAE33058.1"/>
    <property type="molecule type" value="mRNA"/>
</dbReference>
<dbReference type="EMBL" id="BC019436">
    <property type="protein sequence ID" value="AAH19436.1"/>
    <property type="molecule type" value="mRNA"/>
</dbReference>
<dbReference type="EMBL" id="BC056608">
    <property type="protein sequence ID" value="AAH56608.1"/>
    <property type="molecule type" value="mRNA"/>
</dbReference>
<dbReference type="CCDS" id="CCDS23244.1"/>
<dbReference type="RefSeq" id="NP_001411608.1">
    <property type="nucleotide sequence ID" value="NM_001424679.1"/>
</dbReference>
<dbReference type="RefSeq" id="NP_598744.1">
    <property type="nucleotide sequence ID" value="NM_133983.5"/>
</dbReference>
<dbReference type="PDB" id="4I0K">
    <property type="method" value="X-ray"/>
    <property type="resolution" value="2.97 A"/>
    <property type="chains" value="A=34-247"/>
</dbReference>
<dbReference type="PDBsum" id="4I0K"/>
<dbReference type="SMR" id="Q8VE98"/>
<dbReference type="BioGRID" id="221924">
    <property type="interactions" value="1"/>
</dbReference>
<dbReference type="DIP" id="DIP-60156N"/>
<dbReference type="FunCoup" id="Q8VE98">
    <property type="interactions" value="572"/>
</dbReference>
<dbReference type="STRING" id="10090.ENSMUSP00000129418"/>
<dbReference type="GlyCosmos" id="Q8VE98">
    <property type="glycosylation" value="3 sites, No reported glycans"/>
</dbReference>
<dbReference type="GlyGen" id="Q8VE98">
    <property type="glycosylation" value="4 sites, 4 N-linked glycans (4 sites)"/>
</dbReference>
<dbReference type="iPTMnet" id="Q8VE98"/>
<dbReference type="PhosphoSitePlus" id="Q8VE98"/>
<dbReference type="SwissPalm" id="Q8VE98"/>
<dbReference type="PaxDb" id="10090-ENSMUSP00000129418"/>
<dbReference type="PeptideAtlas" id="Q8VE98"/>
<dbReference type="ProteomicsDB" id="265622"/>
<dbReference type="Pumba" id="Q8VE98"/>
<dbReference type="Antibodypedia" id="2288">
    <property type="antibodies" value="1064 antibodies from 48 providers"/>
</dbReference>
<dbReference type="Ensembl" id="ENSMUST00000039788.11">
    <property type="protein sequence ID" value="ENSMUSP00000042681.5"/>
    <property type="gene ID" value="ENSMUSG00000035914.12"/>
</dbReference>
<dbReference type="Ensembl" id="ENSMUST00000165365.3">
    <property type="protein sequence ID" value="ENSMUSP00000129418.2"/>
    <property type="gene ID" value="ENSMUSG00000035914.12"/>
</dbReference>
<dbReference type="GeneID" id="102657"/>
<dbReference type="KEGG" id="mmu:102657"/>
<dbReference type="UCSC" id="uc009pxb.1">
    <property type="organism name" value="mouse"/>
</dbReference>
<dbReference type="AGR" id="MGI:2183926"/>
<dbReference type="CTD" id="80381"/>
<dbReference type="MGI" id="MGI:2183926">
    <property type="gene designation" value="Cd276"/>
</dbReference>
<dbReference type="VEuPathDB" id="HostDB:ENSMUSG00000035914"/>
<dbReference type="eggNOG" id="ENOG502QU94">
    <property type="taxonomic scope" value="Eukaryota"/>
</dbReference>
<dbReference type="GeneTree" id="ENSGT00940000154641"/>
<dbReference type="HOGENOM" id="CLU_013137_8_1_1"/>
<dbReference type="InParanoid" id="Q8VE98"/>
<dbReference type="OMA" id="VLWQDSQ"/>
<dbReference type="OrthoDB" id="8897154at2759"/>
<dbReference type="PhylomeDB" id="Q8VE98"/>
<dbReference type="TreeFam" id="TF331083"/>
<dbReference type="BioGRID-ORCS" id="102657">
    <property type="hits" value="7 hits in 82 CRISPR screens"/>
</dbReference>
<dbReference type="ChiTaRS" id="Cd276">
    <property type="organism name" value="mouse"/>
</dbReference>
<dbReference type="EvolutionaryTrace" id="Q8VE98"/>
<dbReference type="PRO" id="PR:Q8VE98"/>
<dbReference type="Proteomes" id="UP000000589">
    <property type="component" value="Chromosome 9"/>
</dbReference>
<dbReference type="RNAct" id="Q8VE98">
    <property type="molecule type" value="protein"/>
</dbReference>
<dbReference type="Bgee" id="ENSMUSG00000035914">
    <property type="expression patterns" value="Expressed in embryonic post-anal tail and 193 other cell types or tissues"/>
</dbReference>
<dbReference type="ExpressionAtlas" id="Q8VE98">
    <property type="expression patterns" value="baseline and differential"/>
</dbReference>
<dbReference type="GO" id="GO:0009897">
    <property type="term" value="C:external side of plasma membrane"/>
    <property type="evidence" value="ECO:0000314"/>
    <property type="project" value="MGI"/>
</dbReference>
<dbReference type="GO" id="GO:0042802">
    <property type="term" value="F:identical protein binding"/>
    <property type="evidence" value="ECO:0000353"/>
    <property type="project" value="IntAct"/>
</dbReference>
<dbReference type="GO" id="GO:0005102">
    <property type="term" value="F:signaling receptor binding"/>
    <property type="evidence" value="ECO:0000314"/>
    <property type="project" value="MGI"/>
</dbReference>
<dbReference type="GO" id="GO:0050728">
    <property type="term" value="P:negative regulation of inflammatory response"/>
    <property type="evidence" value="ECO:0000315"/>
    <property type="project" value="MGI"/>
</dbReference>
<dbReference type="GO" id="GO:0032703">
    <property type="term" value="P:negative regulation of interleukin-2 production"/>
    <property type="evidence" value="ECO:0000314"/>
    <property type="project" value="MGI"/>
</dbReference>
<dbReference type="GO" id="GO:0042130">
    <property type="term" value="P:negative regulation of T cell proliferation"/>
    <property type="evidence" value="ECO:0000314"/>
    <property type="project" value="MGI"/>
</dbReference>
<dbReference type="GO" id="GO:0032689">
    <property type="term" value="P:negative regulation of type II interferon production"/>
    <property type="evidence" value="ECO:0000314"/>
    <property type="project" value="MGI"/>
</dbReference>
<dbReference type="GO" id="GO:0030501">
    <property type="term" value="P:positive regulation of bone mineralization"/>
    <property type="evidence" value="ECO:0000315"/>
    <property type="project" value="MGI"/>
</dbReference>
<dbReference type="GO" id="GO:0032743">
    <property type="term" value="P:positive regulation of interleukin-2 production"/>
    <property type="evidence" value="ECO:0000315"/>
    <property type="project" value="MGI"/>
</dbReference>
<dbReference type="GO" id="GO:0045669">
    <property type="term" value="P:positive regulation of osteoblast differentiation"/>
    <property type="evidence" value="ECO:0000315"/>
    <property type="project" value="MGI"/>
</dbReference>
<dbReference type="GO" id="GO:0042102">
    <property type="term" value="P:positive regulation of T cell proliferation"/>
    <property type="evidence" value="ECO:0000315"/>
    <property type="project" value="MGI"/>
</dbReference>
<dbReference type="GO" id="GO:0032729">
    <property type="term" value="P:positive regulation of type II interferon production"/>
    <property type="evidence" value="ECO:0007669"/>
    <property type="project" value="Ensembl"/>
</dbReference>
<dbReference type="GO" id="GO:0050776">
    <property type="term" value="P:regulation of immune response"/>
    <property type="evidence" value="ECO:0000315"/>
    <property type="project" value="MGI"/>
</dbReference>
<dbReference type="GO" id="GO:0042098">
    <property type="term" value="P:T cell proliferation"/>
    <property type="evidence" value="ECO:0000314"/>
    <property type="project" value="MGI"/>
</dbReference>
<dbReference type="CDD" id="cd00096">
    <property type="entry name" value="Ig"/>
    <property type="match status" value="1"/>
</dbReference>
<dbReference type="CDD" id="cd20934">
    <property type="entry name" value="IgV_B7-H3"/>
    <property type="match status" value="1"/>
</dbReference>
<dbReference type="FunFam" id="2.60.40.10:FF:000438">
    <property type="entry name" value="CD276 antigen"/>
    <property type="match status" value="1"/>
</dbReference>
<dbReference type="FunFam" id="2.60.40.10:FF:000499">
    <property type="entry name" value="CD276 antigen"/>
    <property type="match status" value="1"/>
</dbReference>
<dbReference type="Gene3D" id="2.60.40.10">
    <property type="entry name" value="Immunoglobulins"/>
    <property type="match status" value="2"/>
</dbReference>
<dbReference type="InterPro" id="IPR053896">
    <property type="entry name" value="BTN3A2-like_Ig-C"/>
</dbReference>
<dbReference type="InterPro" id="IPR047318">
    <property type="entry name" value="CD276_IgV"/>
</dbReference>
<dbReference type="InterPro" id="IPR007110">
    <property type="entry name" value="Ig-like_dom"/>
</dbReference>
<dbReference type="InterPro" id="IPR036179">
    <property type="entry name" value="Ig-like_dom_sf"/>
</dbReference>
<dbReference type="InterPro" id="IPR013783">
    <property type="entry name" value="Ig-like_fold"/>
</dbReference>
<dbReference type="InterPro" id="IPR003599">
    <property type="entry name" value="Ig_sub"/>
</dbReference>
<dbReference type="InterPro" id="IPR003598">
    <property type="entry name" value="Ig_sub2"/>
</dbReference>
<dbReference type="InterPro" id="IPR013106">
    <property type="entry name" value="Ig_V-set"/>
</dbReference>
<dbReference type="InterPro" id="IPR050504">
    <property type="entry name" value="IgSF_BTN/MOG"/>
</dbReference>
<dbReference type="PANTHER" id="PTHR24100">
    <property type="entry name" value="BUTYROPHILIN"/>
    <property type="match status" value="1"/>
</dbReference>
<dbReference type="PANTHER" id="PTHR24100:SF155">
    <property type="entry name" value="CD276 ANTIGEN"/>
    <property type="match status" value="1"/>
</dbReference>
<dbReference type="Pfam" id="PF22705">
    <property type="entry name" value="C2-set_3"/>
    <property type="match status" value="1"/>
</dbReference>
<dbReference type="Pfam" id="PF07686">
    <property type="entry name" value="V-set"/>
    <property type="match status" value="1"/>
</dbReference>
<dbReference type="SMART" id="SM00409">
    <property type="entry name" value="IG"/>
    <property type="match status" value="2"/>
</dbReference>
<dbReference type="SMART" id="SM00408">
    <property type="entry name" value="IGc2"/>
    <property type="match status" value="2"/>
</dbReference>
<dbReference type="SMART" id="SM00406">
    <property type="entry name" value="IGv"/>
    <property type="match status" value="1"/>
</dbReference>
<dbReference type="SUPFAM" id="SSF48726">
    <property type="entry name" value="Immunoglobulin"/>
    <property type="match status" value="2"/>
</dbReference>
<dbReference type="PROSITE" id="PS50835">
    <property type="entry name" value="IG_LIKE"/>
    <property type="match status" value="2"/>
</dbReference>
<evidence type="ECO:0000250" key="1"/>
<evidence type="ECO:0000255" key="2"/>
<evidence type="ECO:0000255" key="3">
    <source>
        <dbReference type="PROSITE-ProRule" id="PRU00114"/>
    </source>
</evidence>
<evidence type="ECO:0000256" key="4">
    <source>
        <dbReference type="SAM" id="MobiDB-lite"/>
    </source>
</evidence>
<evidence type="ECO:0000269" key="5">
    <source>
    </source>
</evidence>
<evidence type="ECO:0000269" key="6">
    <source>
    </source>
</evidence>
<evidence type="ECO:0000269" key="7">
    <source>
    </source>
</evidence>
<evidence type="ECO:0000269" key="8">
    <source>
    </source>
</evidence>
<evidence type="ECO:0000269" key="9">
    <source>
    </source>
</evidence>
<evidence type="ECO:0000269" key="10">
    <source>
    </source>
</evidence>
<evidence type="ECO:0000269" key="11">
    <source>
    </source>
</evidence>
<evidence type="ECO:0000305" key="12"/>
<evidence type="ECO:0007829" key="13">
    <source>
        <dbReference type="PDB" id="4I0K"/>
    </source>
</evidence>
<feature type="signal peptide" evidence="2">
    <location>
        <begin position="1"/>
        <end position="28"/>
    </location>
</feature>
<feature type="chain" id="PRO_0000045802" description="CD276 antigen">
    <location>
        <begin position="29"/>
        <end position="316"/>
    </location>
</feature>
<feature type="topological domain" description="Extracellular" evidence="2">
    <location>
        <begin position="29"/>
        <end position="248"/>
    </location>
</feature>
<feature type="transmembrane region" description="Helical" evidence="2">
    <location>
        <begin position="249"/>
        <end position="269"/>
    </location>
</feature>
<feature type="topological domain" description="Cytoplasmic" evidence="2">
    <location>
        <begin position="270"/>
        <end position="316"/>
    </location>
</feature>
<feature type="domain" description="Ig-like V-type">
    <location>
        <begin position="29"/>
        <end position="139"/>
    </location>
</feature>
<feature type="domain" description="Ig-like C2-type">
    <location>
        <begin position="145"/>
        <end position="238"/>
    </location>
</feature>
<feature type="region of interest" description="Disordered" evidence="4">
    <location>
        <begin position="280"/>
        <end position="316"/>
    </location>
</feature>
<feature type="compositionally biased region" description="Acidic residues" evidence="4">
    <location>
        <begin position="280"/>
        <end position="292"/>
    </location>
</feature>
<feature type="glycosylation site" description="N-linked (GlcNAc...) asparagine" evidence="10 11">
    <location>
        <position position="104"/>
    </location>
</feature>
<feature type="glycosylation site" description="N-linked (GlcNAc...) asparagine" evidence="10 11">
    <location>
        <position position="189"/>
    </location>
</feature>
<feature type="glycosylation site" description="N-linked (GlcNAc...) asparagine" evidence="10">
    <location>
        <position position="215"/>
    </location>
</feature>
<feature type="disulfide bond" evidence="3">
    <location>
        <begin position="165"/>
        <end position="220"/>
    </location>
</feature>
<feature type="strand" evidence="13">
    <location>
        <begin position="46"/>
        <end position="48"/>
    </location>
</feature>
<feature type="turn" evidence="13">
    <location>
        <begin position="60"/>
        <end position="62"/>
    </location>
</feature>
<feature type="strand" evidence="13">
    <location>
        <begin position="63"/>
        <end position="69"/>
    </location>
</feature>
<feature type="turn" evidence="13">
    <location>
        <begin position="70"/>
        <end position="72"/>
    </location>
</feature>
<feature type="strand" evidence="13">
    <location>
        <begin position="75"/>
        <end position="80"/>
    </location>
</feature>
<feature type="strand" evidence="13">
    <location>
        <begin position="83"/>
        <end position="89"/>
    </location>
</feature>
<feature type="turn" evidence="13">
    <location>
        <begin position="97"/>
        <end position="99"/>
    </location>
</feature>
<feature type="helix" evidence="13">
    <location>
        <begin position="100"/>
        <end position="102"/>
    </location>
</feature>
<feature type="strand" evidence="13">
    <location>
        <begin position="107"/>
        <end position="109"/>
    </location>
</feature>
<feature type="helix" evidence="13">
    <location>
        <begin position="114"/>
        <end position="116"/>
    </location>
</feature>
<feature type="strand" evidence="13">
    <location>
        <begin position="120"/>
        <end position="126"/>
    </location>
</feature>
<feature type="strand" evidence="13">
    <location>
        <begin position="146"/>
        <end position="148"/>
    </location>
</feature>
<feature type="strand" evidence="13">
    <location>
        <begin position="159"/>
        <end position="172"/>
    </location>
</feature>
<feature type="strand" evidence="13">
    <location>
        <begin position="175"/>
        <end position="179"/>
    </location>
</feature>
<feature type="strand" evidence="13">
    <location>
        <begin position="188"/>
        <end position="196"/>
    </location>
</feature>
<feature type="strand" evidence="13">
    <location>
        <begin position="202"/>
        <end position="211"/>
    </location>
</feature>
<feature type="strand" evidence="13">
    <location>
        <begin position="217"/>
        <end position="224"/>
    </location>
</feature>
<feature type="turn" evidence="13">
    <location>
        <begin position="225"/>
        <end position="228"/>
    </location>
</feature>
<feature type="strand" evidence="13">
    <location>
        <begin position="229"/>
        <end position="236"/>
    </location>
</feature>
<proteinExistence type="evidence at protein level"/>
<name>CD276_MOUSE</name>
<gene>
    <name type="primary">Cd276</name>
    <name type="synonym">B7h3</name>
</gene>
<reference key="1">
    <citation type="journal article" date="2002" name="J. Immunol.">
        <title>Characterization of mouse and human B7-H3 genes.</title>
        <authorList>
            <person name="Sun M."/>
            <person name="Richards S."/>
            <person name="Prasad D.V."/>
            <person name="Mai X.M."/>
            <person name="Rudensky A."/>
            <person name="Dong C."/>
        </authorList>
    </citation>
    <scope>NUCLEOTIDE SEQUENCE [MRNA]</scope>
    <scope>FUNCTION</scope>
    <scope>TISSUE SPECIFICITY</scope>
</reference>
<reference key="2">
    <citation type="journal article" date="2003" name="Nat. Immunol.">
        <title>The B7 family member B7-H3 preferentially down-regulates T helper type 1-mediated immune responses.</title>
        <authorList>
            <person name="Suh W.-K."/>
            <person name="Gajewska B.U."/>
            <person name="Okada H."/>
            <person name="Gronski M.A."/>
            <person name="Bertram E.M."/>
            <person name="Dawicki W."/>
            <person name="Duncan G.S."/>
            <person name="Bukczynski J."/>
            <person name="Plyte S."/>
            <person name="Elia A."/>
            <person name="Wakeham A."/>
            <person name="Itie A."/>
            <person name="Chung S."/>
            <person name="Da Costa J."/>
            <person name="Arya S."/>
            <person name="Horan T."/>
            <person name="Campbell P."/>
            <person name="Gaida K."/>
            <person name="Ohashi P.S."/>
            <person name="Watts T.H."/>
            <person name="Yoshinaga S.K."/>
            <person name="Bray M.R."/>
            <person name="Jordana M."/>
            <person name="Mak T.W."/>
        </authorList>
    </citation>
    <scope>NUCLEOTIDE SEQUENCE [MRNA]</scope>
    <scope>FUNCTION</scope>
    <scope>DEVELOPMENTAL STAGE</scope>
    <scope>DISRUPTION PHENOTYPE</scope>
    <source>
        <strain>C57BL/6J</strain>
    </source>
</reference>
<reference key="3">
    <citation type="journal article" date="2005" name="Science">
        <title>The transcriptional landscape of the mammalian genome.</title>
        <authorList>
            <person name="Carninci P."/>
            <person name="Kasukawa T."/>
            <person name="Katayama S."/>
            <person name="Gough J."/>
            <person name="Frith M.C."/>
            <person name="Maeda N."/>
            <person name="Oyama R."/>
            <person name="Ravasi T."/>
            <person name="Lenhard B."/>
            <person name="Wells C."/>
            <person name="Kodzius R."/>
            <person name="Shimokawa K."/>
            <person name="Bajic V.B."/>
            <person name="Brenner S.E."/>
            <person name="Batalov S."/>
            <person name="Forrest A.R."/>
            <person name="Zavolan M."/>
            <person name="Davis M.J."/>
            <person name="Wilming L.G."/>
            <person name="Aidinis V."/>
            <person name="Allen J.E."/>
            <person name="Ambesi-Impiombato A."/>
            <person name="Apweiler R."/>
            <person name="Aturaliya R.N."/>
            <person name="Bailey T.L."/>
            <person name="Bansal M."/>
            <person name="Baxter L."/>
            <person name="Beisel K.W."/>
            <person name="Bersano T."/>
            <person name="Bono H."/>
            <person name="Chalk A.M."/>
            <person name="Chiu K.P."/>
            <person name="Choudhary V."/>
            <person name="Christoffels A."/>
            <person name="Clutterbuck D.R."/>
            <person name="Crowe M.L."/>
            <person name="Dalla E."/>
            <person name="Dalrymple B.P."/>
            <person name="de Bono B."/>
            <person name="Della Gatta G."/>
            <person name="di Bernardo D."/>
            <person name="Down T."/>
            <person name="Engstrom P."/>
            <person name="Fagiolini M."/>
            <person name="Faulkner G."/>
            <person name="Fletcher C.F."/>
            <person name="Fukushima T."/>
            <person name="Furuno M."/>
            <person name="Futaki S."/>
            <person name="Gariboldi M."/>
            <person name="Georgii-Hemming P."/>
            <person name="Gingeras T.R."/>
            <person name="Gojobori T."/>
            <person name="Green R.E."/>
            <person name="Gustincich S."/>
            <person name="Harbers M."/>
            <person name="Hayashi Y."/>
            <person name="Hensch T.K."/>
            <person name="Hirokawa N."/>
            <person name="Hill D."/>
            <person name="Huminiecki L."/>
            <person name="Iacono M."/>
            <person name="Ikeo K."/>
            <person name="Iwama A."/>
            <person name="Ishikawa T."/>
            <person name="Jakt M."/>
            <person name="Kanapin A."/>
            <person name="Katoh M."/>
            <person name="Kawasawa Y."/>
            <person name="Kelso J."/>
            <person name="Kitamura H."/>
            <person name="Kitano H."/>
            <person name="Kollias G."/>
            <person name="Krishnan S.P."/>
            <person name="Kruger A."/>
            <person name="Kummerfeld S.K."/>
            <person name="Kurochkin I.V."/>
            <person name="Lareau L.F."/>
            <person name="Lazarevic D."/>
            <person name="Lipovich L."/>
            <person name="Liu J."/>
            <person name="Liuni S."/>
            <person name="McWilliam S."/>
            <person name="Madan Babu M."/>
            <person name="Madera M."/>
            <person name="Marchionni L."/>
            <person name="Matsuda H."/>
            <person name="Matsuzawa S."/>
            <person name="Miki H."/>
            <person name="Mignone F."/>
            <person name="Miyake S."/>
            <person name="Morris K."/>
            <person name="Mottagui-Tabar S."/>
            <person name="Mulder N."/>
            <person name="Nakano N."/>
            <person name="Nakauchi H."/>
            <person name="Ng P."/>
            <person name="Nilsson R."/>
            <person name="Nishiguchi S."/>
            <person name="Nishikawa S."/>
            <person name="Nori F."/>
            <person name="Ohara O."/>
            <person name="Okazaki Y."/>
            <person name="Orlando V."/>
            <person name="Pang K.C."/>
            <person name="Pavan W.J."/>
            <person name="Pavesi G."/>
            <person name="Pesole G."/>
            <person name="Petrovsky N."/>
            <person name="Piazza S."/>
            <person name="Reed J."/>
            <person name="Reid J.F."/>
            <person name="Ring B.Z."/>
            <person name="Ringwald M."/>
            <person name="Rost B."/>
            <person name="Ruan Y."/>
            <person name="Salzberg S.L."/>
            <person name="Sandelin A."/>
            <person name="Schneider C."/>
            <person name="Schoenbach C."/>
            <person name="Sekiguchi K."/>
            <person name="Semple C.A."/>
            <person name="Seno S."/>
            <person name="Sessa L."/>
            <person name="Sheng Y."/>
            <person name="Shibata Y."/>
            <person name="Shimada H."/>
            <person name="Shimada K."/>
            <person name="Silva D."/>
            <person name="Sinclair B."/>
            <person name="Sperling S."/>
            <person name="Stupka E."/>
            <person name="Sugiura K."/>
            <person name="Sultana R."/>
            <person name="Takenaka Y."/>
            <person name="Taki K."/>
            <person name="Tammoja K."/>
            <person name="Tan S.L."/>
            <person name="Tang S."/>
            <person name="Taylor M.S."/>
            <person name="Tegner J."/>
            <person name="Teichmann S.A."/>
            <person name="Ueda H.R."/>
            <person name="van Nimwegen E."/>
            <person name="Verardo R."/>
            <person name="Wei C.L."/>
            <person name="Yagi K."/>
            <person name="Yamanishi H."/>
            <person name="Zabarovsky E."/>
            <person name="Zhu S."/>
            <person name="Zimmer A."/>
            <person name="Hide W."/>
            <person name="Bult C."/>
            <person name="Grimmond S.M."/>
            <person name="Teasdale R.D."/>
            <person name="Liu E.T."/>
            <person name="Brusic V."/>
            <person name="Quackenbush J."/>
            <person name="Wahlestedt C."/>
            <person name="Mattick J.S."/>
            <person name="Hume D.A."/>
            <person name="Kai C."/>
            <person name="Sasaki D."/>
            <person name="Tomaru Y."/>
            <person name="Fukuda S."/>
            <person name="Kanamori-Katayama M."/>
            <person name="Suzuki M."/>
            <person name="Aoki J."/>
            <person name="Arakawa T."/>
            <person name="Iida J."/>
            <person name="Imamura K."/>
            <person name="Itoh M."/>
            <person name="Kato T."/>
            <person name="Kawaji H."/>
            <person name="Kawagashira N."/>
            <person name="Kawashima T."/>
            <person name="Kojima M."/>
            <person name="Kondo S."/>
            <person name="Konno H."/>
            <person name="Nakano K."/>
            <person name="Ninomiya N."/>
            <person name="Nishio T."/>
            <person name="Okada M."/>
            <person name="Plessy C."/>
            <person name="Shibata K."/>
            <person name="Shiraki T."/>
            <person name="Suzuki S."/>
            <person name="Tagami M."/>
            <person name="Waki K."/>
            <person name="Watahiki A."/>
            <person name="Okamura-Oho Y."/>
            <person name="Suzuki H."/>
            <person name="Kawai J."/>
            <person name="Hayashizaki Y."/>
        </authorList>
    </citation>
    <scope>NUCLEOTIDE SEQUENCE [LARGE SCALE MRNA]</scope>
    <source>
        <strain>NOD</strain>
    </source>
</reference>
<reference key="4">
    <citation type="journal article" date="2004" name="Genome Res.">
        <title>The status, quality, and expansion of the NIH full-length cDNA project: the Mammalian Gene Collection (MGC).</title>
        <authorList>
            <consortium name="The MGC Project Team"/>
        </authorList>
    </citation>
    <scope>NUCLEOTIDE SEQUENCE [LARGE SCALE MRNA]</scope>
    <source>
        <strain>FVB/N</strain>
        <tissue>Colon</tissue>
        <tissue>Mammary tumor</tissue>
    </source>
</reference>
<reference key="5">
    <citation type="journal article" date="2003" name="Genomics">
        <title>Duplication of primate and rodent B7-H3 immunoglobulin V- and C-like domains: divergent history of functional redundancy and exon loss.</title>
        <authorList>
            <person name="Ling V."/>
            <person name="Wu P.W."/>
            <person name="Spaulding V."/>
            <person name="Kieleczawa J."/>
            <person name="Luxenberg D."/>
            <person name="Carreno B.M."/>
            <person name="Collins M."/>
        </authorList>
    </citation>
    <scope>GENOMIC DOMAIN DUPLICATION</scope>
</reference>
<reference key="6">
    <citation type="journal article" date="2003" name="Gene Ther.">
        <title>Mouse B7-H3 induces antitumor immunity.</title>
        <authorList>
            <person name="Sun X."/>
            <person name="Vale M."/>
            <person name="Leung E."/>
            <person name="Kanwar J.R."/>
            <person name="Gupta R."/>
            <person name="Krissansen G.W."/>
        </authorList>
    </citation>
    <scope>FUNCTION</scope>
    <scope>GENE TRANSFER</scope>
</reference>
<reference key="7">
    <citation type="journal article" date="2004" name="J. Immunol.">
        <title>Murine B7-H3 is a negative regulator of T cells.</title>
        <authorList>
            <person name="Prasad D.V."/>
            <person name="Nguyen T."/>
            <person name="Li Z."/>
            <person name="Yang Y."/>
            <person name="Duong J."/>
            <person name="Wang Y."/>
            <person name="Dong C."/>
        </authorList>
    </citation>
    <scope>FUNCTION</scope>
</reference>
<reference key="8">
    <citation type="journal article" date="2005" name="Eur. J. Immunol.">
        <title>B7-H3 promotes acute and chronic allograft rejection.</title>
        <authorList>
            <person name="Wang L."/>
            <person name="Fraser C.C."/>
            <person name="Kikly K."/>
            <person name="Wells A.D."/>
            <person name="Han R."/>
            <person name="Coyle A.J."/>
            <person name="Chen L."/>
            <person name="Hancock W.W."/>
        </authorList>
    </citation>
    <scope>FUNCTION</scope>
    <scope>INDUCTION</scope>
</reference>
<reference key="9">
    <citation type="journal article" date="2009" name="Mol. Cell. Proteomics">
        <title>The mouse C2C12 myoblast cell surface N-linked glycoproteome: identification, glycosite occupancy, and membrane orientation.</title>
        <authorList>
            <person name="Gundry R.L."/>
            <person name="Raginski K."/>
            <person name="Tarasova Y."/>
            <person name="Tchernyshyov I."/>
            <person name="Bausch-Fluck D."/>
            <person name="Elliott S.T."/>
            <person name="Boheler K.R."/>
            <person name="Van Eyk J.E."/>
            <person name="Wollscheid B."/>
        </authorList>
    </citation>
    <scope>GLYCOSYLATION [LARGE SCALE ANALYSIS] AT ASN-104 AND ASN-189</scope>
    <source>
        <tissue>Myoblast</tissue>
    </source>
</reference>
<reference key="10">
    <citation type="journal article" date="2009" name="Nat. Biotechnol.">
        <title>Mass-spectrometric identification and relative quantification of N-linked cell surface glycoproteins.</title>
        <authorList>
            <person name="Wollscheid B."/>
            <person name="Bausch-Fluck D."/>
            <person name="Henderson C."/>
            <person name="O'Brien R."/>
            <person name="Bibel M."/>
            <person name="Schiess R."/>
            <person name="Aebersold R."/>
            <person name="Watts J.D."/>
        </authorList>
    </citation>
    <scope>GLYCOSYLATION [LARGE SCALE ANALYSIS] AT ASN-104; ASN-189 AND ASN-215</scope>
</reference>
<sequence>MLRGWGGPSVGVCVRTALGVLCLCLTGAVEVQVSEDPVVALVDTDATLRCSFSPEPGFSLAQLNLIWQLTDTKQLVHSFTEGRDQGSAYSNRTALFPDLLVQGNASLRLQRVRVTDEGSYTCFVSIQDFDSAAVSLQVAAPYSKPSMTLEPNKDLRPGNMVTITCSSYQGYPEAEVFWKDGQGVPLTGNVTTSQMANERGLFDVHSVLRVVLGANGTYSCLVRNPVLQQDAHGSVTITGQPLTFPPEALWVTVGLSVCLVVLLVALAFVCWRKIKQSCEEENAGAEDQDGDGEGSKTALRPLKPSENKEDDGQEIA</sequence>